<comment type="similarity">
    <text evidence="1">Belongs to the UPF0301 (AlgH) family.</text>
</comment>
<keyword id="KW-1185">Reference proteome</keyword>
<reference key="1">
    <citation type="journal article" date="2010" name="J. Bacteriol.">
        <title>Complete genome sequence of the aerobic facultative methanotroph Methylocella silvestris BL2.</title>
        <authorList>
            <person name="Chen Y."/>
            <person name="Crombie A."/>
            <person name="Rahman M.T."/>
            <person name="Dedysh S.N."/>
            <person name="Liesack W."/>
            <person name="Stott M.B."/>
            <person name="Alam M."/>
            <person name="Theisen A.R."/>
            <person name="Murrell J.C."/>
            <person name="Dunfield P.F."/>
        </authorList>
    </citation>
    <scope>NUCLEOTIDE SEQUENCE [LARGE SCALE GENOMIC DNA]</scope>
    <source>
        <strain>DSM 15510 / CIP 108128 / LMG 27833 / NCIMB 13906 / BL2</strain>
    </source>
</reference>
<gene>
    <name type="ordered locus">Msil_1255</name>
</gene>
<proteinExistence type="inferred from homology"/>
<sequence>MGSRLPRDGGKQGHGAFLDGQLLVAMPGMSDNRFSRSVIYLCAHSEEGAMGIILNRPARKVTFSELLVQLDVIKADEMIRLPAQAELVQVLKGGPVETGRGFVLHSNDFFIDDSTLPIDAGVSLTATIDILRAIAKGDGPDRAILALGYAGWSAGQLEAEMQDNGWLNIPADPSLIFDEALGSKYERALQKIGIDPGRLSSDLGHA</sequence>
<protein>
    <recommendedName>
        <fullName evidence="1">UPF0301 protein Msil_1255</fullName>
    </recommendedName>
</protein>
<accession>B8EPL9</accession>
<name>Y1255_METSB</name>
<evidence type="ECO:0000255" key="1">
    <source>
        <dbReference type="HAMAP-Rule" id="MF_00758"/>
    </source>
</evidence>
<dbReference type="EMBL" id="CP001280">
    <property type="protein sequence ID" value="ACK50224.1"/>
    <property type="molecule type" value="Genomic_DNA"/>
</dbReference>
<dbReference type="RefSeq" id="WP_012590294.1">
    <property type="nucleotide sequence ID" value="NC_011666.1"/>
</dbReference>
<dbReference type="SMR" id="B8EPL9"/>
<dbReference type="STRING" id="395965.Msil_1255"/>
<dbReference type="KEGG" id="msl:Msil_1255"/>
<dbReference type="eggNOG" id="COG1678">
    <property type="taxonomic scope" value="Bacteria"/>
</dbReference>
<dbReference type="HOGENOM" id="CLU_057596_1_0_5"/>
<dbReference type="OrthoDB" id="9807486at2"/>
<dbReference type="Proteomes" id="UP000002257">
    <property type="component" value="Chromosome"/>
</dbReference>
<dbReference type="GO" id="GO:0005829">
    <property type="term" value="C:cytosol"/>
    <property type="evidence" value="ECO:0007669"/>
    <property type="project" value="TreeGrafter"/>
</dbReference>
<dbReference type="Gene3D" id="3.40.1740.10">
    <property type="entry name" value="VC0467-like"/>
    <property type="match status" value="1"/>
</dbReference>
<dbReference type="HAMAP" id="MF_00758">
    <property type="entry name" value="UPF0301"/>
    <property type="match status" value="1"/>
</dbReference>
<dbReference type="InterPro" id="IPR003774">
    <property type="entry name" value="AlgH-like"/>
</dbReference>
<dbReference type="NCBIfam" id="NF001268">
    <property type="entry name" value="PRK00228.1-4"/>
    <property type="match status" value="1"/>
</dbReference>
<dbReference type="PANTHER" id="PTHR30327">
    <property type="entry name" value="UNCHARACTERIZED PROTEIN YQGE"/>
    <property type="match status" value="1"/>
</dbReference>
<dbReference type="PANTHER" id="PTHR30327:SF1">
    <property type="entry name" value="UPF0301 PROTEIN YQGE"/>
    <property type="match status" value="1"/>
</dbReference>
<dbReference type="Pfam" id="PF02622">
    <property type="entry name" value="DUF179"/>
    <property type="match status" value="1"/>
</dbReference>
<dbReference type="SUPFAM" id="SSF143456">
    <property type="entry name" value="VC0467-like"/>
    <property type="match status" value="1"/>
</dbReference>
<organism>
    <name type="scientific">Methylocella silvestris (strain DSM 15510 / CIP 108128 / LMG 27833 / NCIMB 13906 / BL2)</name>
    <dbReference type="NCBI Taxonomy" id="395965"/>
    <lineage>
        <taxon>Bacteria</taxon>
        <taxon>Pseudomonadati</taxon>
        <taxon>Pseudomonadota</taxon>
        <taxon>Alphaproteobacteria</taxon>
        <taxon>Hyphomicrobiales</taxon>
        <taxon>Beijerinckiaceae</taxon>
        <taxon>Methylocella</taxon>
    </lineage>
</organism>
<feature type="chain" id="PRO_1000148388" description="UPF0301 protein Msil_1255">
    <location>
        <begin position="1"/>
        <end position="206"/>
    </location>
</feature>